<accession>Q29L19</accession>
<proteinExistence type="inferred from homology"/>
<protein>
    <recommendedName>
        <fullName evidence="1">Eukaryotic translation initiation factor 3 subunit I</fullName>
        <shortName evidence="1">eIF3i</shortName>
    </recommendedName>
    <alternativeName>
        <fullName evidence="1">Eukaryotic translation initiation factor 3 subunit 2</fullName>
    </alternativeName>
    <alternativeName>
        <fullName>TRIP-1 homolog</fullName>
    </alternativeName>
</protein>
<comment type="function">
    <text evidence="1">Component of the eukaryotic translation initiation factor 3 (eIF-3) complex, which is involved in protein synthesis of a specialized repertoire of mRNAs and, together with other initiation factors, stimulates binding of mRNA and methionyl-tRNAi to the 40S ribosome. The eIF-3 complex specifically targets and initiates translation of a subset of mRNAs involved in cell proliferation.</text>
</comment>
<comment type="subunit">
    <text evidence="1">Component of the eukaryotic translation initiation factor 3 (eIF-3) complex. The eIF-3 complex interacts with pix.</text>
</comment>
<comment type="subcellular location">
    <subcellularLocation>
        <location evidence="1">Cytoplasm</location>
    </subcellularLocation>
</comment>
<comment type="similarity">
    <text evidence="1">Belongs to the eIF-3 subunit I family.</text>
</comment>
<organism>
    <name type="scientific">Drosophila pseudoobscura pseudoobscura</name>
    <name type="common">Fruit fly</name>
    <dbReference type="NCBI Taxonomy" id="46245"/>
    <lineage>
        <taxon>Eukaryota</taxon>
        <taxon>Metazoa</taxon>
        <taxon>Ecdysozoa</taxon>
        <taxon>Arthropoda</taxon>
        <taxon>Hexapoda</taxon>
        <taxon>Insecta</taxon>
        <taxon>Pterygota</taxon>
        <taxon>Neoptera</taxon>
        <taxon>Endopterygota</taxon>
        <taxon>Diptera</taxon>
        <taxon>Brachycera</taxon>
        <taxon>Muscomorpha</taxon>
        <taxon>Ephydroidea</taxon>
        <taxon>Drosophilidae</taxon>
        <taxon>Drosophila</taxon>
        <taxon>Sophophora</taxon>
    </lineage>
</organism>
<reference key="1">
    <citation type="journal article" date="2005" name="Genome Res.">
        <title>Comparative genome sequencing of Drosophila pseudoobscura: chromosomal, gene, and cis-element evolution.</title>
        <authorList>
            <person name="Richards S."/>
            <person name="Liu Y."/>
            <person name="Bettencourt B.R."/>
            <person name="Hradecky P."/>
            <person name="Letovsky S."/>
            <person name="Nielsen R."/>
            <person name="Thornton K."/>
            <person name="Hubisz M.J."/>
            <person name="Chen R."/>
            <person name="Meisel R.P."/>
            <person name="Couronne O."/>
            <person name="Hua S."/>
            <person name="Smith M.A."/>
            <person name="Zhang P."/>
            <person name="Liu J."/>
            <person name="Bussemaker H.J."/>
            <person name="van Batenburg M.F."/>
            <person name="Howells S.L."/>
            <person name="Scherer S.E."/>
            <person name="Sodergren E."/>
            <person name="Matthews B.B."/>
            <person name="Crosby M.A."/>
            <person name="Schroeder A.J."/>
            <person name="Ortiz-Barrientos D."/>
            <person name="Rives C.M."/>
            <person name="Metzker M.L."/>
            <person name="Muzny D.M."/>
            <person name="Scott G."/>
            <person name="Steffen D."/>
            <person name="Wheeler D.A."/>
            <person name="Worley K.C."/>
            <person name="Havlak P."/>
            <person name="Durbin K.J."/>
            <person name="Egan A."/>
            <person name="Gill R."/>
            <person name="Hume J."/>
            <person name="Morgan M.B."/>
            <person name="Miner G."/>
            <person name="Hamilton C."/>
            <person name="Huang Y."/>
            <person name="Waldron L."/>
            <person name="Verduzco D."/>
            <person name="Clerc-Blankenburg K.P."/>
            <person name="Dubchak I."/>
            <person name="Noor M.A.F."/>
            <person name="Anderson W."/>
            <person name="White K.P."/>
            <person name="Clark A.G."/>
            <person name="Schaeffer S.W."/>
            <person name="Gelbart W.M."/>
            <person name="Weinstock G.M."/>
            <person name="Gibbs R.A."/>
        </authorList>
    </citation>
    <scope>NUCLEOTIDE SEQUENCE [LARGE SCALE GENOMIC DNA]</scope>
    <source>
        <strain>MV2-25 / Tucson 14011-0121.94</strain>
    </source>
</reference>
<evidence type="ECO:0000255" key="1">
    <source>
        <dbReference type="HAMAP-Rule" id="MF_03008"/>
    </source>
</evidence>
<sequence>MRPLMLQGHERSITQIKYNREGDLLFSCSKDQKPNVWYSLNGERLGTYDGHQGAVWCLDVDWESRKLITGAGDMTTKLWDVEYGTIIASIPTKSSVRTSNFSFSGNQAAYSTDKAMGQNCELFIIDVRNADSTLADQTPTLRIPMTESKITSMQWGPLDETIITGHDNGNIAIWDVRKGQKVVDSGSDHAAGINDMQLSKDGTMFVTASRDTTAKLFDSESLMCLKTYKTERPVNSAAISPILDHVVLGGGQDAMEVTTTSTKAGKFDSRFFHLIYEEEFARLKGHFGPINSLAFHPDGKSYASGGEDGFVRVQTFDSTYFENIFE</sequence>
<name>EIF3I_DROPS</name>
<dbReference type="EMBL" id="CH379061">
    <property type="protein sequence ID" value="EAL33005.2"/>
    <property type="molecule type" value="Genomic_DNA"/>
</dbReference>
<dbReference type="RefSeq" id="XP_001355946.2">
    <property type="nucleotide sequence ID" value="XM_001355910.3"/>
</dbReference>
<dbReference type="SMR" id="Q29L19"/>
<dbReference type="FunCoup" id="Q29L19">
    <property type="interactions" value="1631"/>
</dbReference>
<dbReference type="STRING" id="46245.Q29L19"/>
<dbReference type="EnsemblMetazoa" id="FBtr0289301">
    <property type="protein sequence ID" value="FBpp0287739"/>
    <property type="gene ID" value="FBgn0081375"/>
</dbReference>
<dbReference type="GeneID" id="4816344"/>
<dbReference type="KEGG" id="dpo:4816344"/>
<dbReference type="CTD" id="8668"/>
<dbReference type="eggNOG" id="KOG0643">
    <property type="taxonomic scope" value="Eukaryota"/>
</dbReference>
<dbReference type="HOGENOM" id="CLU_043845_0_1_1"/>
<dbReference type="InParanoid" id="Q29L19"/>
<dbReference type="OMA" id="VWFSHNG"/>
<dbReference type="ChiTaRS" id="Trip1">
    <property type="organism name" value="fly"/>
</dbReference>
<dbReference type="Proteomes" id="UP000001819">
    <property type="component" value="Chromosome 4"/>
</dbReference>
<dbReference type="Bgee" id="FBgn0081375">
    <property type="expression patterns" value="Expressed in female reproductive system and 2 other cell types or tissues"/>
</dbReference>
<dbReference type="GO" id="GO:0016282">
    <property type="term" value="C:eukaryotic 43S preinitiation complex"/>
    <property type="evidence" value="ECO:0007669"/>
    <property type="project" value="UniProtKB-UniRule"/>
</dbReference>
<dbReference type="GO" id="GO:0033290">
    <property type="term" value="C:eukaryotic 48S preinitiation complex"/>
    <property type="evidence" value="ECO:0007669"/>
    <property type="project" value="UniProtKB-UniRule"/>
</dbReference>
<dbReference type="GO" id="GO:0071541">
    <property type="term" value="C:eukaryotic translation initiation factor 3 complex, eIF3m"/>
    <property type="evidence" value="ECO:0007669"/>
    <property type="project" value="TreeGrafter"/>
</dbReference>
<dbReference type="GO" id="GO:0003723">
    <property type="term" value="F:RNA binding"/>
    <property type="evidence" value="ECO:0007669"/>
    <property type="project" value="TreeGrafter"/>
</dbReference>
<dbReference type="GO" id="GO:0003743">
    <property type="term" value="F:translation initiation factor activity"/>
    <property type="evidence" value="ECO:0007669"/>
    <property type="project" value="UniProtKB-UniRule"/>
</dbReference>
<dbReference type="GO" id="GO:0001732">
    <property type="term" value="P:formation of cytoplasmic translation initiation complex"/>
    <property type="evidence" value="ECO:0007669"/>
    <property type="project" value="UniProtKB-UniRule"/>
</dbReference>
<dbReference type="FunFam" id="2.130.10.10:FF:000127">
    <property type="entry name" value="Eukaryotic translation initiation factor 3 subunit I"/>
    <property type="match status" value="1"/>
</dbReference>
<dbReference type="Gene3D" id="2.130.10.10">
    <property type="entry name" value="YVTN repeat-like/Quinoprotein amine dehydrogenase"/>
    <property type="match status" value="1"/>
</dbReference>
<dbReference type="HAMAP" id="MF_03008">
    <property type="entry name" value="eIF3i"/>
    <property type="match status" value="1"/>
</dbReference>
<dbReference type="InterPro" id="IPR027525">
    <property type="entry name" value="eIF3i"/>
</dbReference>
<dbReference type="InterPro" id="IPR015943">
    <property type="entry name" value="WD40/YVTN_repeat-like_dom_sf"/>
</dbReference>
<dbReference type="InterPro" id="IPR019775">
    <property type="entry name" value="WD40_repeat_CS"/>
</dbReference>
<dbReference type="InterPro" id="IPR036322">
    <property type="entry name" value="WD40_repeat_dom_sf"/>
</dbReference>
<dbReference type="InterPro" id="IPR001680">
    <property type="entry name" value="WD40_rpt"/>
</dbReference>
<dbReference type="PANTHER" id="PTHR19877">
    <property type="entry name" value="EUKARYOTIC TRANSLATION INITIATION FACTOR 3 SUBUNIT I"/>
    <property type="match status" value="1"/>
</dbReference>
<dbReference type="PANTHER" id="PTHR19877:SF1">
    <property type="entry name" value="EUKARYOTIC TRANSLATION INITIATION FACTOR 3 SUBUNIT I"/>
    <property type="match status" value="1"/>
</dbReference>
<dbReference type="Pfam" id="PF24805">
    <property type="entry name" value="EIF3I"/>
    <property type="match status" value="1"/>
</dbReference>
<dbReference type="SMART" id="SM00320">
    <property type="entry name" value="WD40"/>
    <property type="match status" value="6"/>
</dbReference>
<dbReference type="SUPFAM" id="SSF50978">
    <property type="entry name" value="WD40 repeat-like"/>
    <property type="match status" value="1"/>
</dbReference>
<dbReference type="PROSITE" id="PS00678">
    <property type="entry name" value="WD_REPEATS_1"/>
    <property type="match status" value="2"/>
</dbReference>
<dbReference type="PROSITE" id="PS50082">
    <property type="entry name" value="WD_REPEATS_2"/>
    <property type="match status" value="5"/>
</dbReference>
<dbReference type="PROSITE" id="PS50294">
    <property type="entry name" value="WD_REPEATS_REGION"/>
    <property type="match status" value="2"/>
</dbReference>
<keyword id="KW-0963">Cytoplasm</keyword>
<keyword id="KW-0396">Initiation factor</keyword>
<keyword id="KW-0648">Protein biosynthesis</keyword>
<keyword id="KW-1185">Reference proteome</keyword>
<keyword id="KW-0677">Repeat</keyword>
<keyword id="KW-0853">WD repeat</keyword>
<feature type="chain" id="PRO_0000365347" description="Eukaryotic translation initiation factor 3 subunit I">
    <location>
        <begin position="1"/>
        <end position="326"/>
    </location>
</feature>
<feature type="repeat" description="WD 1">
    <location>
        <begin position="8"/>
        <end position="47"/>
    </location>
</feature>
<feature type="repeat" description="WD 2">
    <location>
        <begin position="50"/>
        <end position="89"/>
    </location>
</feature>
<feature type="repeat" description="WD 3">
    <location>
        <begin position="145"/>
        <end position="184"/>
    </location>
</feature>
<feature type="repeat" description="WD 4">
    <location>
        <begin position="188"/>
        <end position="227"/>
    </location>
</feature>
<feature type="repeat" description="WD 5">
    <location>
        <begin position="285"/>
        <end position="326"/>
    </location>
</feature>
<gene>
    <name evidence="1" type="primary">eIF3i</name>
    <name evidence="1" type="synonym">eif3-S2</name>
    <name evidence="1" type="synonym">Trip1</name>
    <name type="ORF">GA21387</name>
</gene>